<dbReference type="EMBL" id="K03458">
    <property type="protein sequence ID" value="AAA45379.1"/>
    <property type="molecule type" value="Genomic_RNA"/>
</dbReference>
<dbReference type="PIR" id="B26192">
    <property type="entry name" value="ASLJZR"/>
</dbReference>
<dbReference type="SMR" id="P04596"/>
<dbReference type="GO" id="GO:0030430">
    <property type="term" value="C:host cell cytoplasm"/>
    <property type="evidence" value="ECO:0007669"/>
    <property type="project" value="UniProtKB-SubCell"/>
</dbReference>
<dbReference type="GO" id="GO:0020002">
    <property type="term" value="C:host cell plasma membrane"/>
    <property type="evidence" value="ECO:0007669"/>
    <property type="project" value="UniProtKB-SubCell"/>
</dbReference>
<dbReference type="GO" id="GO:0016020">
    <property type="term" value="C:membrane"/>
    <property type="evidence" value="ECO:0007669"/>
    <property type="project" value="UniProtKB-UniRule"/>
</dbReference>
<dbReference type="GO" id="GO:0044423">
    <property type="term" value="C:virion component"/>
    <property type="evidence" value="ECO:0007669"/>
    <property type="project" value="UniProtKB-UniRule"/>
</dbReference>
<dbReference type="GO" id="GO:0046872">
    <property type="term" value="F:metal ion binding"/>
    <property type="evidence" value="ECO:0007669"/>
    <property type="project" value="UniProtKB-KW"/>
</dbReference>
<dbReference type="GO" id="GO:0003723">
    <property type="term" value="F:RNA binding"/>
    <property type="evidence" value="ECO:0007669"/>
    <property type="project" value="UniProtKB-UniRule"/>
</dbReference>
<dbReference type="GO" id="GO:0019058">
    <property type="term" value="P:viral life cycle"/>
    <property type="evidence" value="ECO:0007669"/>
    <property type="project" value="InterPro"/>
</dbReference>
<dbReference type="HAMAP" id="MF_04081">
    <property type="entry name" value="HIV_VIF"/>
    <property type="match status" value="1"/>
</dbReference>
<dbReference type="InterPro" id="IPR000475">
    <property type="entry name" value="Vif"/>
</dbReference>
<dbReference type="Pfam" id="PF00559">
    <property type="entry name" value="Vif"/>
    <property type="match status" value="1"/>
</dbReference>
<dbReference type="PRINTS" id="PR00349">
    <property type="entry name" value="VIRIONINFFCT"/>
</dbReference>
<sequence length="188" mass="22159">MENRWQVMIVWQVDRMRIRTWKSLVKHHMYVSKKASRWFYRHHYDSPHPKISSEVHIPLGEARLVVKTYWGLHTGERDWHLGQGVSIEWRKRRYSTQVDPGLADQLIHMYYFDCFSEAAIRKAILGHIVSHRCEYQAGHSKVGSLQYLALTALIAPKKIKPPLPSVRKLTEDRWNKPQKTKGHKGAIQ</sequence>
<comment type="function">
    <text evidence="2">Counteracts the innate antiviral activity of host APOBEC3F and APOBEC3G by promoting their ubiquitination and degradation. Acts as a substrate recognition component of an E3 ubiquitin-protein ligase complex: mechanistically, Vif hijacks a host cullin-5-RING E3 ubiquitin-protein ligase complex (ECS complex) and the transcription coactivator CBFB/CBF-beta to form an active E3 ubiquitin-protein ligase complex that targets APOBEC3G and APOBEC3F for polyubiquitination, leading to their degradation by the proteasome. Vif interaction with APOBEC3G also blocks its cytidine deaminase activity in a proteasome-independent manner, suggesting a dual inhibitory mechanism. May interact directly with APOBEC3G mRNA in order to inhibit its translation. Association with CBFB/CBF-beta also inhibits the transcription coactivator activity of CBFB/CBF-beta. Seems to play a role in viral morphology by affecting the stability of the viral nucleoprotein core. Finally, Vif also contributes to the G2 cell cycle arrest observed in HIV infected cells.</text>
</comment>
<comment type="subunit">
    <text evidence="1">Homomultimer; in vitro and presumably in vivo. Interacts with viral RNA and Pr55Gag precursor; these interactions mediate Vif incorporation into the virion. Interacts with the viral reverse transcriptase. Forms cullin-5-RING E3 ubiquitin-protein ligase complex (ECS complex) by interacting with host CUL5, RBX2, elongin BC complex (ELOB and ELOC) and CBFB/CBF-beta. Within the ECS complex, Vif interacts directly with host CUL5, ELOC and APOBEC (APOBEC3F and APOBEC3G) substrates. The ECS complex also contains some single-stranded RNA (ssRNA) that acts as a glue that bridges Vif with APOBEC (APOBEC3F and APOBEC3G) substrates. Interacts with host UBCE7IP1 isoform 3/ZIN and possibly with SAT. Interacts with host tyrosine kinases HCK and FYN; these interactions may decrease level of phosphorylated APOBEC3G incorporation into virions. Interacts with host ABCE1; this interaction may play a role in protecting viral RNA from damage during viral assembly. Interacts with host MDM2; this interaction targets Vif for degradation by the proteasome.</text>
</comment>
<comment type="subcellular location">
    <subcellularLocation>
        <location evidence="2">Host cytoplasm</location>
    </subcellularLocation>
    <subcellularLocation>
        <location evidence="2">Host cell membrane</location>
        <topology evidence="2">Peripheral membrane protein</topology>
        <orientation evidence="2">Cytoplasmic side</orientation>
    </subcellularLocation>
    <subcellularLocation>
        <location evidence="2">Virion</location>
    </subcellularLocation>
    <text evidence="2">In the cytoplasm, seems to colocalize with intermediate filament vimentin. A fraction is associated with the cytoplasmic side of cellular membranes, presumably via the interaction with Pr55Gag precursor. Incorporated in virions at a ratio of approximately 7 to 20 molecules per virion.</text>
</comment>
<comment type="induction">
    <text evidence="2">Expressed late during infection in a Rev-dependent manner.</text>
</comment>
<comment type="domain">
    <text evidence="2">The BC-like-box motif mediates the interaction with elongin BC complex.</text>
</comment>
<comment type="domain">
    <text evidence="2">The HCCH motif (H-x(5)-C-x(18)-C-x(5)-H) mediates the interaction with CUL5.</text>
</comment>
<comment type="PTM">
    <text evidence="2">Processed in virion by the viral protease.</text>
</comment>
<comment type="PTM">
    <text evidence="2">Highly phosphorylated on serine and threonine residues.</text>
</comment>
<comment type="PTM">
    <text evidence="2">Polyubiquitinated and degraded by the proteasome in the presence of APOBEC3G.</text>
</comment>
<comment type="miscellaneous">
    <text evidence="2">Vif-defective viruses show catastrophic failure in reverse transcription due to APOBEC-induced mutations that initiate a DNA base repair pathway and compromise the structural integrity of the ssDNA. In the absence of Vif, the virion is morphologically abnormal.</text>
</comment>
<comment type="miscellaneous">
    <text evidence="2">HIV-1 lineages are divided in three main groups, M (for Major), O (for Outlier), and N (for New, or Non-M, Non-O). The vast majority of strains found worldwide belong to the group M. Group O seems to be endemic to and largely confined to Cameroon and neighboring countries in West Central Africa, where these viruses represent a small minority of HIV-1 strains. The group N is represented by a limited number of isolates from Cameroonian persons. The group M is further subdivided in 9 clades or subtypes (A to D, F to H, J and K).</text>
</comment>
<comment type="miscellaneous">
    <text evidence="2">Required for replication in 'nonpermissive' cells, including primary T-cells, macrophages and certain T-cell lines, but is dispensable for replication in 'permissive' cell lines, such as 293T cells. In nonpermissive cells, Vif-defective viruses can produce virions, but they fail to complete reverse transcription and cannot successfully infect new cells.</text>
</comment>
<comment type="similarity">
    <text evidence="2">Belongs to the primate lentivirus group Vif protein family.</text>
</comment>
<name>VIF_HV1Z6</name>
<organism>
    <name type="scientific">Human immunodeficiency virus type 1 group M subtype D (isolate Z6)</name>
    <name type="common">HIV-1</name>
    <dbReference type="NCBI Taxonomy" id="11708"/>
    <lineage>
        <taxon>Viruses</taxon>
        <taxon>Riboviria</taxon>
        <taxon>Pararnavirae</taxon>
        <taxon>Artverviricota</taxon>
        <taxon>Revtraviricetes</taxon>
        <taxon>Ortervirales</taxon>
        <taxon>Retroviridae</taxon>
        <taxon>Orthoretrovirinae</taxon>
        <taxon>Lentivirus</taxon>
        <taxon>Human immunodeficiency virus type 1</taxon>
    </lineage>
</organism>
<protein>
    <recommendedName>
        <fullName evidence="2">Virion infectivity factor</fullName>
        <shortName evidence="2">Vif</shortName>
    </recommendedName>
    <alternativeName>
        <fullName evidence="2">SOR protein</fullName>
    </alternativeName>
    <component>
        <recommendedName>
            <fullName evidence="2">p17</fullName>
        </recommendedName>
    </component>
    <component>
        <recommendedName>
            <fullName evidence="2">p7</fullName>
        </recommendedName>
    </component>
</protein>
<organismHost>
    <name type="scientific">Homo sapiens</name>
    <name type="common">Human</name>
    <dbReference type="NCBI Taxonomy" id="9606"/>
</organismHost>
<reference key="1">
    <citation type="journal article" date="1987" name="Gene">
        <title>Molecular characterization of human immunodeficiency virus from Zaire: nucleotide sequence analysis identifies conserved and variable domains in the envelope gene.</title>
        <authorList>
            <person name="Srinivasan A."/>
            <person name="Anand R."/>
            <person name="York D."/>
            <person name="Ranganathan P."/>
            <person name="Feorino P."/>
            <person name="Schochetman G."/>
            <person name="Curran J."/>
            <person name="Kalyanaraman V.S."/>
            <person name="Luciw P.A."/>
            <person name="Sanchez-Pescador R."/>
        </authorList>
    </citation>
    <scope>NUCLEOTIDE SEQUENCE [GENOMIC RNA]</scope>
</reference>
<reference key="2">
    <citation type="journal article" date="2004" name="Trends Mol. Med.">
        <title>The viral infectivity factor (Vif) of HIV-1 unveiled.</title>
        <authorList>
            <person name="Rose K.M."/>
            <person name="Marin M."/>
            <person name="Kozak S.L."/>
            <person name="Kabat D."/>
        </authorList>
    </citation>
    <scope>REVIEW</scope>
</reference>
<proteinExistence type="inferred from homology"/>
<evidence type="ECO:0000250" key="1">
    <source>
        <dbReference type="UniProtKB" id="O70897"/>
    </source>
</evidence>
<evidence type="ECO:0000255" key="2">
    <source>
        <dbReference type="HAMAP-Rule" id="MF_04081"/>
    </source>
</evidence>
<evidence type="ECO:0000256" key="3">
    <source>
        <dbReference type="SAM" id="MobiDB-lite"/>
    </source>
</evidence>
<feature type="chain" id="PRO_0000043068" description="Virion infectivity factor" evidence="2">
    <location>
        <begin position="1"/>
        <end position="188"/>
    </location>
</feature>
<feature type="chain" id="PRO_0000043069" description="p17" evidence="2">
    <location>
        <begin position="1"/>
        <end position="150"/>
    </location>
</feature>
<feature type="chain" id="PRO_0000043070" description="p7" evidence="2">
    <location>
        <begin position="151"/>
        <end position="188"/>
    </location>
</feature>
<feature type="region of interest" description="Interaction with host APOBEC3F; F1-box" evidence="2">
    <location>
        <begin position="14"/>
        <end position="17"/>
    </location>
</feature>
<feature type="region of interest" description="Interaction with host APOBEC3G; G-box" evidence="2">
    <location>
        <begin position="40"/>
        <end position="44"/>
    </location>
</feature>
<feature type="region of interest" description="Interaction with host APOBEC3F and APOBEC3G; FG-box" evidence="2">
    <location>
        <begin position="54"/>
        <end position="72"/>
    </location>
</feature>
<feature type="region of interest" description="Interaction with host APOBEC3F; F2-box" evidence="2">
    <location>
        <begin position="74"/>
        <end position="79"/>
    </location>
</feature>
<feature type="region of interest" description="RNA-binding" evidence="2">
    <location>
        <begin position="75"/>
        <end position="114"/>
    </location>
</feature>
<feature type="region of interest" description="SOCS box-like" evidence="2">
    <location>
        <begin position="151"/>
        <end position="180"/>
    </location>
</feature>
<feature type="region of interest" description="Multimerization" evidence="2">
    <location>
        <begin position="151"/>
        <end position="164"/>
    </location>
</feature>
<feature type="region of interest" description="Disordered" evidence="3">
    <location>
        <begin position="166"/>
        <end position="188"/>
    </location>
</feature>
<feature type="region of interest" description="Membrane association" evidence="2">
    <location>
        <begin position="171"/>
        <end position="172"/>
    </location>
</feature>
<feature type="short sequence motif" description="HCCH motif" evidence="2">
    <location>
        <begin position="108"/>
        <end position="139"/>
    </location>
</feature>
<feature type="short sequence motif" description="BC-box-like motif" evidence="2">
    <location>
        <begin position="144"/>
        <end position="153"/>
    </location>
</feature>
<feature type="compositionally biased region" description="Basic residues" evidence="3">
    <location>
        <begin position="176"/>
        <end position="188"/>
    </location>
</feature>
<feature type="binding site" evidence="2">
    <location>
        <position position="108"/>
    </location>
    <ligand>
        <name>Zn(2+)</name>
        <dbReference type="ChEBI" id="CHEBI:29105"/>
    </ligand>
</feature>
<feature type="binding site" evidence="2">
    <location>
        <position position="114"/>
    </location>
    <ligand>
        <name>Zn(2+)</name>
        <dbReference type="ChEBI" id="CHEBI:29105"/>
    </ligand>
</feature>
<feature type="binding site" evidence="2">
    <location>
        <position position="133"/>
    </location>
    <ligand>
        <name>Zn(2+)</name>
        <dbReference type="ChEBI" id="CHEBI:29105"/>
    </ligand>
</feature>
<feature type="binding site" evidence="2">
    <location>
        <position position="139"/>
    </location>
    <ligand>
        <name>Zn(2+)</name>
        <dbReference type="ChEBI" id="CHEBI:29105"/>
    </ligand>
</feature>
<feature type="site" description="Cleavage in virion (by viral protease)" evidence="2">
    <location>
        <begin position="150"/>
        <end position="151"/>
    </location>
</feature>
<feature type="modified residue" description="Phosphothreonine; by host MAP4K1" evidence="2">
    <location>
        <position position="96"/>
    </location>
</feature>
<feature type="modified residue" description="Phosphoserine; by host" evidence="2">
    <location>
        <position position="144"/>
    </location>
</feature>
<feature type="modified residue" description="Phosphoserine; by host MAP4K1" evidence="2">
    <location>
        <position position="165"/>
    </location>
</feature>
<accession>P04596</accession>
<gene>
    <name evidence="2" type="primary">vif</name>
</gene>
<keyword id="KW-0014">AIDS</keyword>
<keyword id="KW-1032">Host cell membrane</keyword>
<keyword id="KW-1035">Host cytoplasm</keyword>
<keyword id="KW-1043">Host membrane</keyword>
<keyword id="KW-0945">Host-virus interaction</keyword>
<keyword id="KW-0472">Membrane</keyword>
<keyword id="KW-0479">Metal-binding</keyword>
<keyword id="KW-0597">Phosphoprotein</keyword>
<keyword id="KW-0694">RNA-binding</keyword>
<keyword id="KW-0832">Ubl conjugation</keyword>
<keyword id="KW-0833">Ubl conjugation pathway</keyword>
<keyword id="KW-0946">Virion</keyword>
<keyword id="KW-0862">Zinc</keyword>